<organism>
    <name type="scientific">Homo sapiens</name>
    <name type="common">Human</name>
    <dbReference type="NCBI Taxonomy" id="9606"/>
    <lineage>
        <taxon>Eukaryota</taxon>
        <taxon>Metazoa</taxon>
        <taxon>Chordata</taxon>
        <taxon>Craniata</taxon>
        <taxon>Vertebrata</taxon>
        <taxon>Euteleostomi</taxon>
        <taxon>Mammalia</taxon>
        <taxon>Eutheria</taxon>
        <taxon>Euarchontoglires</taxon>
        <taxon>Primates</taxon>
        <taxon>Haplorrhini</taxon>
        <taxon>Catarrhini</taxon>
        <taxon>Hominidae</taxon>
        <taxon>Homo</taxon>
    </lineage>
</organism>
<gene>
    <name type="primary">SST</name>
</gene>
<dbReference type="EMBL" id="J00306">
    <property type="protein sequence ID" value="AAA60566.1"/>
    <property type="molecule type" value="Genomic_DNA"/>
</dbReference>
<dbReference type="EMBL" id="AK312177">
    <property type="protein sequence ID" value="BAG35110.1"/>
    <property type="molecule type" value="mRNA"/>
</dbReference>
<dbReference type="EMBL" id="CH471052">
    <property type="protein sequence ID" value="EAW78145.1"/>
    <property type="molecule type" value="Genomic_DNA"/>
</dbReference>
<dbReference type="EMBL" id="BC032625">
    <property type="protein sequence ID" value="AAH32625.1"/>
    <property type="molecule type" value="mRNA"/>
</dbReference>
<dbReference type="CCDS" id="CCDS3288.1"/>
<dbReference type="PIR" id="A43614">
    <property type="entry name" value="RIHUS1"/>
</dbReference>
<dbReference type="RefSeq" id="NP_001039.1">
    <property type="nucleotide sequence ID" value="NM_001048.4"/>
</dbReference>
<dbReference type="PDB" id="2MI1">
    <property type="method" value="NMR"/>
    <property type="chains" value="A=103-116"/>
</dbReference>
<dbReference type="PDB" id="7T10">
    <property type="method" value="EM"/>
    <property type="resolution" value="2.50 A"/>
    <property type="chains" value="P=103-116"/>
</dbReference>
<dbReference type="PDB" id="7WIC">
    <property type="method" value="EM"/>
    <property type="resolution" value="2.80 A"/>
    <property type="chains" value="L=103-116"/>
</dbReference>
<dbReference type="PDB" id="7WJ5">
    <property type="method" value="EM"/>
    <property type="resolution" value="3.72 A"/>
    <property type="chains" value="S=103-116"/>
</dbReference>
<dbReference type="PDB" id="7XAT">
    <property type="method" value="EM"/>
    <property type="resolution" value="2.85 A"/>
    <property type="chains" value="F=103-116"/>
</dbReference>
<dbReference type="PDB" id="7XMR">
    <property type="method" value="EM"/>
    <property type="resolution" value="3.10 A"/>
    <property type="chains" value="L=103-116"/>
</dbReference>
<dbReference type="PDB" id="7XMS">
    <property type="method" value="EM"/>
    <property type="resolution" value="2.90 A"/>
    <property type="chains" value="L=103-116"/>
</dbReference>
<dbReference type="PDB" id="7Y27">
    <property type="method" value="EM"/>
    <property type="resolution" value="3.48 A"/>
    <property type="chains" value="C=105-116"/>
</dbReference>
<dbReference type="PDBsum" id="2MI1"/>
<dbReference type="PDBsum" id="7T10"/>
<dbReference type="PDBsum" id="7WIC"/>
<dbReference type="PDBsum" id="7WJ5"/>
<dbReference type="PDBsum" id="7XAT"/>
<dbReference type="PDBsum" id="7XMR"/>
<dbReference type="PDBsum" id="7XMS"/>
<dbReference type="PDBsum" id="7Y27"/>
<dbReference type="EMDB" id="EMD-25586"/>
<dbReference type="EMDB" id="EMD-32528"/>
<dbReference type="EMDB" id="EMD-32543"/>
<dbReference type="EMDB" id="EMD-33098"/>
<dbReference type="EMDB" id="EMD-33302"/>
<dbReference type="EMDB" id="EMD-33303"/>
<dbReference type="EMDB" id="EMD-33587"/>
<dbReference type="SMR" id="P61278"/>
<dbReference type="BioGRID" id="112628">
    <property type="interactions" value="4"/>
</dbReference>
<dbReference type="FunCoup" id="P61278">
    <property type="interactions" value="794"/>
</dbReference>
<dbReference type="IntAct" id="P61278">
    <property type="interactions" value="33"/>
</dbReference>
<dbReference type="STRING" id="9606.ENSP00000287641"/>
<dbReference type="BindingDB" id="P61278"/>
<dbReference type="DrugBank" id="DB00847">
    <property type="generic name" value="Cysteamine"/>
</dbReference>
<dbReference type="GlyGen" id="P61278">
    <property type="glycosylation" value="1 site"/>
</dbReference>
<dbReference type="PhosphoSitePlus" id="P61278"/>
<dbReference type="BioMuta" id="SST"/>
<dbReference type="DMDM" id="47117741"/>
<dbReference type="MassIVE" id="P61278"/>
<dbReference type="PaxDb" id="9606-ENSP00000287641"/>
<dbReference type="PeptideAtlas" id="P61278"/>
<dbReference type="ProteomicsDB" id="57289"/>
<dbReference type="ABCD" id="P61278">
    <property type="antibodies" value="1 sequenced antibody"/>
</dbReference>
<dbReference type="Antibodypedia" id="3518">
    <property type="antibodies" value="524 antibodies from 43 providers"/>
</dbReference>
<dbReference type="DNASU" id="6750"/>
<dbReference type="Ensembl" id="ENST00000287641.4">
    <property type="protein sequence ID" value="ENSP00000287641.3"/>
    <property type="gene ID" value="ENSG00000157005.4"/>
</dbReference>
<dbReference type="GeneID" id="6750"/>
<dbReference type="KEGG" id="hsa:6750"/>
<dbReference type="MANE-Select" id="ENST00000287641.4">
    <property type="protein sequence ID" value="ENSP00000287641.3"/>
    <property type="RefSeq nucleotide sequence ID" value="NM_001048.4"/>
    <property type="RefSeq protein sequence ID" value="NP_001039.1"/>
</dbReference>
<dbReference type="UCSC" id="uc003frn.4">
    <property type="organism name" value="human"/>
</dbReference>
<dbReference type="AGR" id="HGNC:11329"/>
<dbReference type="CTD" id="6750"/>
<dbReference type="DisGeNET" id="6750"/>
<dbReference type="GeneCards" id="SST"/>
<dbReference type="HGNC" id="HGNC:11329">
    <property type="gene designation" value="SST"/>
</dbReference>
<dbReference type="HPA" id="ENSG00000157005">
    <property type="expression patterns" value="Group enriched (brain, intestine, pancreas, stomach)"/>
</dbReference>
<dbReference type="MIM" id="182450">
    <property type="type" value="gene"/>
</dbReference>
<dbReference type="neXtProt" id="NX_P61278"/>
<dbReference type="OpenTargets" id="ENSG00000157005"/>
<dbReference type="PharmGKB" id="PA36153"/>
<dbReference type="VEuPathDB" id="HostDB:ENSG00000157005"/>
<dbReference type="eggNOG" id="ENOG502S11K">
    <property type="taxonomic scope" value="Eukaryota"/>
</dbReference>
<dbReference type="GeneTree" id="ENSGT00510000047914"/>
<dbReference type="HOGENOM" id="CLU_124515_1_1_1"/>
<dbReference type="InParanoid" id="P61278"/>
<dbReference type="OMA" id="AEQDDMR"/>
<dbReference type="OrthoDB" id="9948948at2759"/>
<dbReference type="PAN-GO" id="P61278">
    <property type="GO annotations" value="2 GO annotations based on evolutionary models"/>
</dbReference>
<dbReference type="PhylomeDB" id="P61278"/>
<dbReference type="TreeFam" id="TF333185"/>
<dbReference type="PathwayCommons" id="P61278"/>
<dbReference type="Reactome" id="R-HSA-375276">
    <property type="pathway name" value="Peptide ligand-binding receptors"/>
</dbReference>
<dbReference type="Reactome" id="R-HSA-418594">
    <property type="pathway name" value="G alpha (i) signalling events"/>
</dbReference>
<dbReference type="Reactome" id="R-HSA-9022702">
    <property type="pathway name" value="MECP2 regulates transcription of neuronal ligands"/>
</dbReference>
<dbReference type="SignaLink" id="P61278"/>
<dbReference type="SIGNOR" id="P61278"/>
<dbReference type="BioGRID-ORCS" id="6750">
    <property type="hits" value="8 hits in 1144 CRISPR screens"/>
</dbReference>
<dbReference type="ChiTaRS" id="SST">
    <property type="organism name" value="human"/>
</dbReference>
<dbReference type="EvolutionaryTrace" id="P61278"/>
<dbReference type="GeneWiki" id="Somatostatin"/>
<dbReference type="GenomeRNAi" id="6750"/>
<dbReference type="Pharos" id="P61278">
    <property type="development level" value="Tbio"/>
</dbReference>
<dbReference type="PRO" id="PR:P61278"/>
<dbReference type="Proteomes" id="UP000005640">
    <property type="component" value="Chromosome 3"/>
</dbReference>
<dbReference type="RNAct" id="P61278">
    <property type="molecule type" value="protein"/>
</dbReference>
<dbReference type="Bgee" id="ENSG00000157005">
    <property type="expression patterns" value="Expressed in type B pancreatic cell and 142 other cell types or tissues"/>
</dbReference>
<dbReference type="GO" id="GO:0005829">
    <property type="term" value="C:cytosol"/>
    <property type="evidence" value="ECO:0007669"/>
    <property type="project" value="Ensembl"/>
</dbReference>
<dbReference type="GO" id="GO:0005576">
    <property type="term" value="C:extracellular region"/>
    <property type="evidence" value="ECO:0000304"/>
    <property type="project" value="Reactome"/>
</dbReference>
<dbReference type="GO" id="GO:0005615">
    <property type="term" value="C:extracellular space"/>
    <property type="evidence" value="ECO:0000318"/>
    <property type="project" value="GO_Central"/>
</dbReference>
<dbReference type="GO" id="GO:0098982">
    <property type="term" value="C:GABA-ergic synapse"/>
    <property type="evidence" value="ECO:0007669"/>
    <property type="project" value="Ensembl"/>
</dbReference>
<dbReference type="GO" id="GO:0043025">
    <property type="term" value="C:neuronal cell body"/>
    <property type="evidence" value="ECO:0007669"/>
    <property type="project" value="Ensembl"/>
</dbReference>
<dbReference type="GO" id="GO:0098992">
    <property type="term" value="C:neuronal dense core vesicle"/>
    <property type="evidence" value="ECO:0007669"/>
    <property type="project" value="Ensembl"/>
</dbReference>
<dbReference type="GO" id="GO:0005179">
    <property type="term" value="F:hormone activity"/>
    <property type="evidence" value="ECO:0000304"/>
    <property type="project" value="UniProtKB"/>
</dbReference>
<dbReference type="GO" id="GO:0007166">
    <property type="term" value="P:cell surface receptor signaling pathway"/>
    <property type="evidence" value="ECO:0000304"/>
    <property type="project" value="UniProtKB"/>
</dbReference>
<dbReference type="GO" id="GO:0007267">
    <property type="term" value="P:cell-cell signaling"/>
    <property type="evidence" value="ECO:0000304"/>
    <property type="project" value="UniProtKB"/>
</dbReference>
<dbReference type="GO" id="GO:0007268">
    <property type="term" value="P:chemical synaptic transmission"/>
    <property type="evidence" value="ECO:0000304"/>
    <property type="project" value="UniProtKB"/>
</dbReference>
<dbReference type="GO" id="GO:0007586">
    <property type="term" value="P:digestion"/>
    <property type="evidence" value="ECO:0000304"/>
    <property type="project" value="UniProtKB"/>
</dbReference>
<dbReference type="GO" id="GO:0007186">
    <property type="term" value="P:G protein-coupled receptor signaling pathway"/>
    <property type="evidence" value="ECO:0000304"/>
    <property type="project" value="UniProtKB"/>
</dbReference>
<dbReference type="GO" id="GO:0008628">
    <property type="term" value="P:hormone-mediated apoptotic signaling pathway"/>
    <property type="evidence" value="ECO:0000304"/>
    <property type="project" value="UniProtKB"/>
</dbReference>
<dbReference type="GO" id="GO:0006972">
    <property type="term" value="P:hyperosmotic response"/>
    <property type="evidence" value="ECO:0007669"/>
    <property type="project" value="Ensembl"/>
</dbReference>
<dbReference type="GO" id="GO:0008285">
    <property type="term" value="P:negative regulation of cell population proliferation"/>
    <property type="evidence" value="ECO:0000304"/>
    <property type="project" value="UniProtKB"/>
</dbReference>
<dbReference type="GO" id="GO:0030334">
    <property type="term" value="P:regulation of cell migration"/>
    <property type="evidence" value="ECO:0000318"/>
    <property type="project" value="GO_Central"/>
</dbReference>
<dbReference type="GO" id="GO:0099072">
    <property type="term" value="P:regulation of postsynaptic membrane neurotransmitter receptor levels"/>
    <property type="evidence" value="ECO:0007669"/>
    <property type="project" value="Ensembl"/>
</dbReference>
<dbReference type="GO" id="GO:0010447">
    <property type="term" value="P:response to acidic pH"/>
    <property type="evidence" value="ECO:0007669"/>
    <property type="project" value="Ensembl"/>
</dbReference>
<dbReference type="GO" id="GO:0043200">
    <property type="term" value="P:response to amino acid"/>
    <property type="evidence" value="ECO:0007669"/>
    <property type="project" value="Ensembl"/>
</dbReference>
<dbReference type="GO" id="GO:0007584">
    <property type="term" value="P:response to nutrient"/>
    <property type="evidence" value="ECO:0000304"/>
    <property type="project" value="UniProtKB"/>
</dbReference>
<dbReference type="GO" id="GO:0048545">
    <property type="term" value="P:response to steroid hormone"/>
    <property type="evidence" value="ECO:0007669"/>
    <property type="project" value="Ensembl"/>
</dbReference>
<dbReference type="GO" id="GO:0009410">
    <property type="term" value="P:response to xenobiotic stimulus"/>
    <property type="evidence" value="ECO:0007669"/>
    <property type="project" value="Ensembl"/>
</dbReference>
<dbReference type="GO" id="GO:0038170">
    <property type="term" value="P:somatostatin signaling pathway"/>
    <property type="evidence" value="ECO:0007669"/>
    <property type="project" value="Ensembl"/>
</dbReference>
<dbReference type="InterPro" id="IPR004250">
    <property type="entry name" value="Somatostatin"/>
</dbReference>
<dbReference type="InterPro" id="IPR018142">
    <property type="entry name" value="Somatostatin/Cortistatin_C"/>
</dbReference>
<dbReference type="PANTHER" id="PTHR10558">
    <property type="entry name" value="SOMATOSTATIN"/>
    <property type="match status" value="1"/>
</dbReference>
<dbReference type="PANTHER" id="PTHR10558:SF2">
    <property type="entry name" value="SOMATOSTATIN"/>
    <property type="match status" value="1"/>
</dbReference>
<dbReference type="Pfam" id="PF03002">
    <property type="entry name" value="Somatostatin"/>
    <property type="match status" value="1"/>
</dbReference>
<dbReference type="PIRSF" id="PIRSF001814">
    <property type="entry name" value="Somatostatin"/>
    <property type="match status" value="1"/>
</dbReference>
<protein>
    <recommendedName>
        <fullName>Somatostatin</fullName>
    </recommendedName>
    <alternativeName>
        <fullName>Growth hormone release-inhibiting factor</fullName>
    </alternativeName>
    <component>
        <recommendedName>
            <fullName>Somatostatin-28</fullName>
        </recommendedName>
    </component>
    <component>
        <recommendedName>
            <fullName>Somatostatin-14</fullName>
            <shortName evidence="6">SST-14</shortName>
        </recommendedName>
    </component>
    <component>
        <recommendedName>
            <fullName evidence="6">Neuronostatin</fullName>
            <shortName evidence="6">NST</shortName>
        </recommendedName>
    </component>
</protein>
<keyword id="KW-0002">3D-structure</keyword>
<keyword id="KW-0027">Amidation</keyword>
<keyword id="KW-0165">Cleavage on pair of basic residues</keyword>
<keyword id="KW-1015">Disulfide bond</keyword>
<keyword id="KW-0372">Hormone</keyword>
<keyword id="KW-0582">Pharmaceutical</keyword>
<keyword id="KW-1267">Proteomics identification</keyword>
<keyword id="KW-1185">Reference proteome</keyword>
<keyword id="KW-0964">Secreted</keyword>
<keyword id="KW-0732">Signal</keyword>
<accession>P61278</accession>
<accession>B2R5G3</accession>
<accession>P01166</accession>
<sequence length="116" mass="12736">MLSCRLQCALAALSIVLALGCVTGAPSDPRLRQFLQKSLAAAAGKQELAKYFLAELLSEPNQTENDALEPEDLSQAAEQDEMRLELQRSANSNPAMAPRERKAGCKNFFWKTFTSC</sequence>
<comment type="function">
    <molecule>Somatostatin-14</molecule>
    <text evidence="5">Inhibits the secretion of pituitary hormones, including that of growth hormone/somatotropin (GH1), PRL, ACTH, luteinizing hormone (LH) and TSH. Also impairs ghrelin- and GnRH-stimulated secretion of GH1 and LH; the inhibition of ghrelin-stimulated secretion of GH1 can be further increased by neuronostatin.</text>
</comment>
<comment type="function">
    <molecule>Neuronostatin</molecule>
    <text evidence="2 3 5">May enhance low-glucose-induced glucagon release by pancreatic alpha cells (By similarity). This effect may be mediated by binding to GPR107 and PKA activation (By similarity). May regulate cardiac contractile function (By similarity). May compromise cardiomyocyte viability (By similarity). In the central nervous system, may impair memory retention and may affect hippocampal excitability (By similarity). May also have anxiolytic and anorexigenic effects (By similarity). May play a role in arterial pressure regulation (By similarity). May inhibit basal, but not ghrelin- or GnRH-stimulated secretion of GH1 or LH, but does not affect the release of other pituitary hormones, including PRL, ACTH, FSH or TSH. Potentiates inhibitory action of somatostatin on ghrelin-stimulated secretion of GH1, but not that on GnRH-stimulated secretion of LH (PubMed:29615476).</text>
</comment>
<comment type="interaction">
    <interactant intactId="EBI-20823968">
        <id>P61278</id>
    </interactant>
    <interactant intactId="EBI-77613">
        <id>P05067</id>
        <label>APP</label>
    </interactant>
    <organismsDiffer>false</organismsDiffer>
    <experiments>3</experiments>
</comment>
<comment type="interaction">
    <interactant intactId="EBI-26451163">
        <id>PRO_0000033087</id>
    </interactant>
    <interactant intactId="EBI-714630">
        <id>P05026</id>
        <label>ATP1B1</label>
    </interactant>
    <organismsDiffer>false</organismsDiffer>
    <experiments>2</experiments>
</comment>
<comment type="interaction">
    <interactant intactId="EBI-20824010">
        <id>PRO_0000033088</id>
    </interactant>
    <interactant intactId="EBI-821758">
        <id>PRO_0000000092</id>
        <label>APP</label>
        <dbReference type="UniProtKB" id="P05067"/>
    </interactant>
    <organismsDiffer>false</organismsDiffer>
    <experiments>8</experiments>
</comment>
<comment type="interaction">
    <interactant intactId="EBI-20824010">
        <id>PRO_0000033088</id>
    </interactant>
    <interactant intactId="EBI-20824010">
        <id>PRO_0000033088</id>
        <label>SST</label>
        <dbReference type="UniProtKB" id="P61278"/>
    </interactant>
    <organismsDiffer>false</organismsDiffer>
    <experiments>3</experiments>
</comment>
<comment type="subcellular location">
    <subcellularLocation>
        <location evidence="3">Secreted</location>
    </subcellularLocation>
</comment>
<comment type="PTM">
    <text evidence="3">C-terminal amidation of the neuronostatin peptide is required for its biological activity, including for the regulation of mean arterial pressure.</text>
</comment>
<comment type="pharmaceutical">
    <text>A synthetic analog known as octreotide or SMS 201-995 is available under the name Sandostatin (Novartis). It is used for the treatment of a variety of disorders including acromegaly and the symptomatic treatment of carcinoid tumors and vasoactive intestinal peptide tumors.</text>
</comment>
<comment type="similarity">
    <text evidence="7">Belongs to the somatostatin family.</text>
</comment>
<comment type="online information" name="Wikipedia">
    <link uri="https://en.wikipedia.org/wiki/Somatostatin"/>
    <text>Somatostatin entry</text>
</comment>
<proteinExistence type="evidence at protein level"/>
<reference key="1">
    <citation type="journal article" date="1982" name="Proc. Natl. Acad. Sci. U.S.A.">
        <title>Human somatostatin I: sequence of the cDNA.</title>
        <authorList>
            <person name="Shen L.-P."/>
            <person name="Pictet R.L."/>
            <person name="Rutter W.J."/>
        </authorList>
    </citation>
    <scope>NUCLEOTIDE SEQUENCE [MRNA]</scope>
    <scope>STRUCTURE BY NMR OF 103-116</scope>
    <scope>DISULFIDE BONDS</scope>
</reference>
<reference key="2">
    <citation type="journal article" date="1984" name="Science">
        <title>Sequence of the human somatostatin I gene.</title>
        <authorList>
            <person name="Shen L.-P."/>
            <person name="Rutter W.J."/>
        </authorList>
    </citation>
    <scope>NUCLEOTIDE SEQUENCE [GENOMIC DNA]</scope>
</reference>
<reference key="3">
    <citation type="journal article" date="2004" name="Nat. Genet.">
        <title>Complete sequencing and characterization of 21,243 full-length human cDNAs.</title>
        <authorList>
            <person name="Ota T."/>
            <person name="Suzuki Y."/>
            <person name="Nishikawa T."/>
            <person name="Otsuki T."/>
            <person name="Sugiyama T."/>
            <person name="Irie R."/>
            <person name="Wakamatsu A."/>
            <person name="Hayashi K."/>
            <person name="Sato H."/>
            <person name="Nagai K."/>
            <person name="Kimura K."/>
            <person name="Makita H."/>
            <person name="Sekine M."/>
            <person name="Obayashi M."/>
            <person name="Nishi T."/>
            <person name="Shibahara T."/>
            <person name="Tanaka T."/>
            <person name="Ishii S."/>
            <person name="Yamamoto J."/>
            <person name="Saito K."/>
            <person name="Kawai Y."/>
            <person name="Isono Y."/>
            <person name="Nakamura Y."/>
            <person name="Nagahari K."/>
            <person name="Murakami K."/>
            <person name="Yasuda T."/>
            <person name="Iwayanagi T."/>
            <person name="Wagatsuma M."/>
            <person name="Shiratori A."/>
            <person name="Sudo H."/>
            <person name="Hosoiri T."/>
            <person name="Kaku Y."/>
            <person name="Kodaira H."/>
            <person name="Kondo H."/>
            <person name="Sugawara M."/>
            <person name="Takahashi M."/>
            <person name="Kanda K."/>
            <person name="Yokoi T."/>
            <person name="Furuya T."/>
            <person name="Kikkawa E."/>
            <person name="Omura Y."/>
            <person name="Abe K."/>
            <person name="Kamihara K."/>
            <person name="Katsuta N."/>
            <person name="Sato K."/>
            <person name="Tanikawa M."/>
            <person name="Yamazaki M."/>
            <person name="Ninomiya K."/>
            <person name="Ishibashi T."/>
            <person name="Yamashita H."/>
            <person name="Murakawa K."/>
            <person name="Fujimori K."/>
            <person name="Tanai H."/>
            <person name="Kimata M."/>
            <person name="Watanabe M."/>
            <person name="Hiraoka S."/>
            <person name="Chiba Y."/>
            <person name="Ishida S."/>
            <person name="Ono Y."/>
            <person name="Takiguchi S."/>
            <person name="Watanabe S."/>
            <person name="Yosida M."/>
            <person name="Hotuta T."/>
            <person name="Kusano J."/>
            <person name="Kanehori K."/>
            <person name="Takahashi-Fujii A."/>
            <person name="Hara H."/>
            <person name="Tanase T.-O."/>
            <person name="Nomura Y."/>
            <person name="Togiya S."/>
            <person name="Komai F."/>
            <person name="Hara R."/>
            <person name="Takeuchi K."/>
            <person name="Arita M."/>
            <person name="Imose N."/>
            <person name="Musashino K."/>
            <person name="Yuuki H."/>
            <person name="Oshima A."/>
            <person name="Sasaki N."/>
            <person name="Aotsuka S."/>
            <person name="Yoshikawa Y."/>
            <person name="Matsunawa H."/>
            <person name="Ichihara T."/>
            <person name="Shiohata N."/>
            <person name="Sano S."/>
            <person name="Moriya S."/>
            <person name="Momiyama H."/>
            <person name="Satoh N."/>
            <person name="Takami S."/>
            <person name="Terashima Y."/>
            <person name="Suzuki O."/>
            <person name="Nakagawa S."/>
            <person name="Senoh A."/>
            <person name="Mizoguchi H."/>
            <person name="Goto Y."/>
            <person name="Shimizu F."/>
            <person name="Wakebe H."/>
            <person name="Hishigaki H."/>
            <person name="Watanabe T."/>
            <person name="Sugiyama A."/>
            <person name="Takemoto M."/>
            <person name="Kawakami B."/>
            <person name="Yamazaki M."/>
            <person name="Watanabe K."/>
            <person name="Kumagai A."/>
            <person name="Itakura S."/>
            <person name="Fukuzumi Y."/>
            <person name="Fujimori Y."/>
            <person name="Komiyama M."/>
            <person name="Tashiro H."/>
            <person name="Tanigami A."/>
            <person name="Fujiwara T."/>
            <person name="Ono T."/>
            <person name="Yamada K."/>
            <person name="Fujii Y."/>
            <person name="Ozaki K."/>
            <person name="Hirao M."/>
            <person name="Ohmori Y."/>
            <person name="Kawabata A."/>
            <person name="Hikiji T."/>
            <person name="Kobatake N."/>
            <person name="Inagaki H."/>
            <person name="Ikema Y."/>
            <person name="Okamoto S."/>
            <person name="Okitani R."/>
            <person name="Kawakami T."/>
            <person name="Noguchi S."/>
            <person name="Itoh T."/>
            <person name="Shigeta K."/>
            <person name="Senba T."/>
            <person name="Matsumura K."/>
            <person name="Nakajima Y."/>
            <person name="Mizuno T."/>
            <person name="Morinaga M."/>
            <person name="Sasaki M."/>
            <person name="Togashi T."/>
            <person name="Oyama M."/>
            <person name="Hata H."/>
            <person name="Watanabe M."/>
            <person name="Komatsu T."/>
            <person name="Mizushima-Sugano J."/>
            <person name="Satoh T."/>
            <person name="Shirai Y."/>
            <person name="Takahashi Y."/>
            <person name="Nakagawa K."/>
            <person name="Okumura K."/>
            <person name="Nagase T."/>
            <person name="Nomura N."/>
            <person name="Kikuchi H."/>
            <person name="Masuho Y."/>
            <person name="Yamashita R."/>
            <person name="Nakai K."/>
            <person name="Yada T."/>
            <person name="Nakamura Y."/>
            <person name="Ohara O."/>
            <person name="Isogai T."/>
            <person name="Sugano S."/>
        </authorList>
    </citation>
    <scope>NUCLEOTIDE SEQUENCE [LARGE SCALE MRNA]</scope>
    <source>
        <tissue>Brain</tissue>
    </source>
</reference>
<reference key="4">
    <citation type="submission" date="2005-09" db="EMBL/GenBank/DDBJ databases">
        <authorList>
            <person name="Mural R.J."/>
            <person name="Istrail S."/>
            <person name="Sutton G.G."/>
            <person name="Florea L."/>
            <person name="Halpern A.L."/>
            <person name="Mobarry C.M."/>
            <person name="Lippert R."/>
            <person name="Walenz B."/>
            <person name="Shatkay H."/>
            <person name="Dew I."/>
            <person name="Miller J.R."/>
            <person name="Flanigan M.J."/>
            <person name="Edwards N.J."/>
            <person name="Bolanos R."/>
            <person name="Fasulo D."/>
            <person name="Halldorsson B.V."/>
            <person name="Hannenhalli S."/>
            <person name="Turner R."/>
            <person name="Yooseph S."/>
            <person name="Lu F."/>
            <person name="Nusskern D.R."/>
            <person name="Shue B.C."/>
            <person name="Zheng X.H."/>
            <person name="Zhong F."/>
            <person name="Delcher A.L."/>
            <person name="Huson D.H."/>
            <person name="Kravitz S.A."/>
            <person name="Mouchard L."/>
            <person name="Reinert K."/>
            <person name="Remington K.A."/>
            <person name="Clark A.G."/>
            <person name="Waterman M.S."/>
            <person name="Eichler E.E."/>
            <person name="Adams M.D."/>
            <person name="Hunkapiller M.W."/>
            <person name="Myers E.W."/>
            <person name="Venter J.C."/>
        </authorList>
    </citation>
    <scope>NUCLEOTIDE SEQUENCE [LARGE SCALE GENOMIC DNA]</scope>
</reference>
<reference key="5">
    <citation type="journal article" date="2004" name="Genome Res.">
        <title>The status, quality, and expansion of the NIH full-length cDNA project: the Mammalian Gene Collection (MGC).</title>
        <authorList>
            <consortium name="The MGC Project Team"/>
        </authorList>
    </citation>
    <scope>NUCLEOTIDE SEQUENCE [LARGE SCALE MRNA]</scope>
    <source>
        <tissue>Fetal brain</tissue>
    </source>
</reference>
<reference key="6">
    <citation type="journal article" date="2014" name="J. Proteomics">
        <title>An enzyme assisted RP-RPLC approach for in-depth analysis of human liver phosphoproteome.</title>
        <authorList>
            <person name="Bian Y."/>
            <person name="Song C."/>
            <person name="Cheng K."/>
            <person name="Dong M."/>
            <person name="Wang F."/>
            <person name="Huang J."/>
            <person name="Sun D."/>
            <person name="Wang L."/>
            <person name="Ye M."/>
            <person name="Zou H."/>
        </authorList>
    </citation>
    <scope>IDENTIFICATION BY MASS SPECTROMETRY [LARGE SCALE ANALYSIS]</scope>
    <source>
        <tissue>Liver</tissue>
    </source>
</reference>
<reference key="7">
    <citation type="journal article" date="2018" name="J. Endocrinol.">
        <title>Neuronostatin exerts actions on pituitary that are unique from its sibling peptide somatostatin.</title>
        <authorList>
            <person name="Luque R.M."/>
            <person name="Kineman R.D."/>
        </authorList>
    </citation>
    <scope>FUNCTION (NEURONOSTATIN AND SOMATOSTATIN-14)</scope>
</reference>
<name>SMS_HUMAN</name>
<feature type="signal peptide">
    <location>
        <begin position="1"/>
        <end position="24"/>
    </location>
</feature>
<feature type="propeptide" id="PRO_0000033086">
    <location>
        <begin position="25"/>
        <end position="88"/>
    </location>
</feature>
<feature type="peptide" id="PRO_0000447375" description="Neuronostatin">
    <location>
        <begin position="31"/>
        <end position="43"/>
    </location>
</feature>
<feature type="peptide" id="PRO_0000033087" description="Somatostatin-28">
    <location>
        <begin position="89"/>
        <end position="116"/>
    </location>
</feature>
<feature type="peptide" id="PRO_0000033088" description="Somatostatin-14">
    <location>
        <begin position="103"/>
        <end position="116"/>
    </location>
</feature>
<feature type="region of interest" description="Disordered" evidence="4">
    <location>
        <begin position="62"/>
        <end position="82"/>
    </location>
</feature>
<feature type="modified residue" description="Alanine amide" evidence="1">
    <location>
        <position position="43"/>
    </location>
</feature>
<feature type="disulfide bond" evidence="8">
    <location>
        <begin position="105"/>
        <end position="116"/>
    </location>
</feature>
<feature type="sequence variant" id="VAR_034499" description="In dbSNP:rs35603672.">
    <original>A</original>
    <variation>V</variation>
    <location>
        <position position="11"/>
    </location>
</feature>
<feature type="sequence variant" id="VAR_034500" description="In dbSNP:rs33934967.">
    <original>N</original>
    <variation>T</variation>
    <location>
        <position position="61"/>
    </location>
</feature>
<feature type="strand" evidence="9">
    <location>
        <begin position="107"/>
        <end position="109"/>
    </location>
</feature>
<feature type="strand" evidence="10">
    <location>
        <begin position="110"/>
        <end position="112"/>
    </location>
</feature>
<evidence type="ECO:0000250" key="1">
    <source>
        <dbReference type="UniProtKB" id="P01168"/>
    </source>
</evidence>
<evidence type="ECO:0000250" key="2">
    <source>
        <dbReference type="UniProtKB" id="P60041"/>
    </source>
</evidence>
<evidence type="ECO:0000250" key="3">
    <source>
        <dbReference type="UniProtKB" id="P60042"/>
    </source>
</evidence>
<evidence type="ECO:0000256" key="4">
    <source>
        <dbReference type="SAM" id="MobiDB-lite"/>
    </source>
</evidence>
<evidence type="ECO:0000269" key="5">
    <source>
    </source>
</evidence>
<evidence type="ECO:0000303" key="6">
    <source>
    </source>
</evidence>
<evidence type="ECO:0000305" key="7"/>
<evidence type="ECO:0007744" key="8">
    <source>
        <dbReference type="PDB" id="2MI1"/>
    </source>
</evidence>
<evidence type="ECO:0007829" key="9">
    <source>
        <dbReference type="PDB" id="7T10"/>
    </source>
</evidence>
<evidence type="ECO:0007829" key="10">
    <source>
        <dbReference type="PDB" id="7XMS"/>
    </source>
</evidence>